<sequence length="880" mass="96208">MALRRSMGWPGLRPLLLAGLASLLLPGSAAAGLKLMGAPVKMTVSQGQPVKLNCSVEGMEDPDIHWMKDGTVVQNASQVSISISEHSWIGLLSLKSVERSDAGLYWCQVKDGEETKISQSVWLTVEGVPFFTVEPKDLAVPPNAPFQLSCEAVGPPEPVTIYWWRGLTKVGGPAPSPSVLNVTGVTQRTEFSCEARNIKGLATSRPAIVRLQAPPAAPFNTTVTTISSYNASVAWVPGADGLALLHSCTVQVAHAPGEWEALAVVVPVPPFTCLLRNLAPATNYSLRVRCANALGPSPYGDWVPFQTKGLAPARAPQNFHAIRTDSGLILEWEEVIPEDPGEGPLGPYKLSWVQENGTQDELMVEGTRANLTDWDPQKDLILRVCASNAIGDGPWSQPLVVSSHDHAGRQGPPHSRTSWVPVVLGVLTALITAAALALILLRKRRKETRFGQAFDSVMARGEPAVHFRAARSFNRERPERIEATLDSLGISDELKEKLEDVLIPEQQFTLGRMLGKGEFGSVREAQLKQEDGSFVKVAVKMLKADIIASSDIEEFLREAACMKEFDHPHVAKLVGVSLRSRAKGRLPIPMVILPFMKHGDLHAFLLASRIGENPFNLPLQTLVRFMVDIACGMEYLSSRNFIHRDLAARNCMLAEDMTVCVADFGLSRKIYSGDYYRQGCASKLPVKWLALESLADNLYTVHSDVWAFGVTMWEIMTRGQTPYAGIENAEIYNYLIGGNRLKQPPECMEEVYDLMYQCWSADPKQRPSFTCLRMELENILGHLSVLSTSQDPLYINIERAEQPTESGSPEVHCGERSSSEAGDGSGVGAVGGIPSDSRYIFSPGGLSESPGQLEQQPESPLNENQRLLLLQQGLLPHSSC</sequence>
<feature type="signal peptide" evidence="4">
    <location>
        <begin position="1"/>
        <end position="30"/>
    </location>
</feature>
<feature type="chain" id="PRO_0000024479" description="Tyrosine-protein kinase receptor TYRO3">
    <location>
        <begin position="31"/>
        <end position="880"/>
    </location>
</feature>
<feature type="topological domain" description="Extracellular" evidence="4">
    <location>
        <begin position="31"/>
        <end position="419"/>
    </location>
</feature>
<feature type="transmembrane region" description="Helical" evidence="4">
    <location>
        <begin position="420"/>
        <end position="440"/>
    </location>
</feature>
<feature type="topological domain" description="Cytoplasmic" evidence="4">
    <location>
        <begin position="441"/>
        <end position="880"/>
    </location>
</feature>
<feature type="domain" description="Ig-like C2-type 1">
    <location>
        <begin position="31"/>
        <end position="118"/>
    </location>
</feature>
<feature type="domain" description="Ig-like C2-type 2">
    <location>
        <begin position="129"/>
        <end position="209"/>
    </location>
</feature>
<feature type="domain" description="Fibronectin type-III 1" evidence="7">
    <location>
        <begin position="217"/>
        <end position="310"/>
    </location>
</feature>
<feature type="domain" description="Fibronectin type-III 2" evidence="7">
    <location>
        <begin position="315"/>
        <end position="406"/>
    </location>
</feature>
<feature type="domain" description="Protein kinase" evidence="6">
    <location>
        <begin position="508"/>
        <end position="785"/>
    </location>
</feature>
<feature type="region of interest" description="Disordered" evidence="9">
    <location>
        <begin position="800"/>
        <end position="864"/>
    </location>
</feature>
<feature type="compositionally biased region" description="Polar residues" evidence="9">
    <location>
        <begin position="849"/>
        <end position="864"/>
    </location>
</feature>
<feature type="active site" description="Proton acceptor" evidence="6 8">
    <location>
        <position position="645"/>
    </location>
</feature>
<feature type="binding site" evidence="6">
    <location>
        <begin position="514"/>
        <end position="522"/>
    </location>
    <ligand>
        <name>ATP</name>
        <dbReference type="ChEBI" id="CHEBI:30616"/>
    </ligand>
</feature>
<feature type="binding site" evidence="6">
    <location>
        <position position="540"/>
    </location>
    <ligand>
        <name>ATP</name>
        <dbReference type="ChEBI" id="CHEBI:30616"/>
    </ligand>
</feature>
<feature type="modified residue" description="Phosphoserine" evidence="20">
    <location>
        <position position="456"/>
    </location>
</feature>
<feature type="modified residue" description="Phosphotyrosine; by autocatalysis" evidence="1">
    <location>
        <position position="671"/>
    </location>
</feature>
<feature type="modified residue" description="Phosphotyrosine; by autocatalysis" evidence="1">
    <location>
        <position position="675"/>
    </location>
</feature>
<feature type="modified residue" description="Phosphotyrosine; by autocatalysis" evidence="1">
    <location>
        <position position="676"/>
    </location>
</feature>
<feature type="modified residue" description="Phosphotyrosine; by autocatalysis" evidence="1">
    <location>
        <position position="794"/>
    </location>
</feature>
<feature type="modified residue" description="Phosphoserine" evidence="3">
    <location>
        <position position="808"/>
    </location>
</feature>
<feature type="modified residue" description="Phosphoserine" evidence="2">
    <location>
        <position position="859"/>
    </location>
</feature>
<feature type="glycosylation site" description="N-linked (GlcNAc...) asparagine" evidence="4">
    <location>
        <position position="53"/>
    </location>
</feature>
<feature type="glycosylation site" description="N-linked (GlcNAc...) asparagine" evidence="4">
    <location>
        <position position="75"/>
    </location>
</feature>
<feature type="glycosylation site" description="N-linked (GlcNAc...) asparagine" evidence="12">
    <location>
        <position position="181"/>
    </location>
</feature>
<feature type="glycosylation site" description="N-linked (GlcNAc...) asparagine" evidence="4">
    <location>
        <position position="220"/>
    </location>
</feature>
<feature type="glycosylation site" description="N-linked (GlcNAc...) asparagine" evidence="4">
    <location>
        <position position="230"/>
    </location>
</feature>
<feature type="glycosylation site" description="N-linked (GlcNAc...) asparagine" evidence="4">
    <location>
        <position position="283"/>
    </location>
</feature>
<feature type="glycosylation site" description="N-linked (GlcNAc...) asparagine" evidence="4">
    <location>
        <position position="356"/>
    </location>
</feature>
<feature type="glycosylation site" description="N-linked (GlcNAc...) asparagine" evidence="4">
    <location>
        <position position="370"/>
    </location>
</feature>
<feature type="disulfide bond" evidence="5">
    <location>
        <begin position="54"/>
        <end position="107"/>
    </location>
</feature>
<feature type="disulfide bond" evidence="5">
    <location>
        <begin position="150"/>
        <end position="193"/>
    </location>
</feature>
<feature type="splice variant" id="VSP_012548" description="In isoform 1." evidence="16 17 18">
    <original>MALRRSMGWPGLRPLLLAGLASLLLPGSAAA</original>
    <variation>MDDKLENTLGRWAGENGLSIGEYLAIK</variation>
    <location>
        <begin position="1"/>
        <end position="31"/>
    </location>
</feature>
<feature type="splice variant" id="VSP_012549" description="In isoform 2." evidence="18">
    <original>MALRRSMGWPGLRPLLLAGLASLLLPGSAAA</original>
    <variation>MGCPAGDWKVFGEGGAWPGACPGSEAGPPQRQRSGQGAGPAAPSG</variation>
    <location>
        <begin position="1"/>
        <end position="31"/>
    </location>
</feature>
<feature type="sequence conflict" description="In Ref. 3; CAA54995." evidence="19" ref="3">
    <original>A</original>
    <variation>R</variation>
    <location>
        <position position="630"/>
    </location>
</feature>
<feature type="sequence conflict" description="In Ref. 5; BAA19191/BAA19192." evidence="19" ref="5">
    <original>SSR</original>
    <variation>AIK</variation>
    <location>
        <begin position="637"/>
        <end position="639"/>
    </location>
</feature>
<feature type="sequence conflict" description="In Ref. 1; AAA19237, 2; AAC52148, 5; BAA19193 and 6; AAB26942/AAB26943." evidence="19" ref="1 2 5 6">
    <original>V</original>
    <variation>L</variation>
    <location>
        <position position="811"/>
    </location>
</feature>
<feature type="strand" evidence="21">
    <location>
        <begin position="509"/>
        <end position="517"/>
    </location>
</feature>
<feature type="strand" evidence="21">
    <location>
        <begin position="520"/>
        <end position="526"/>
    </location>
</feature>
<feature type="strand" evidence="21">
    <location>
        <begin position="536"/>
        <end position="541"/>
    </location>
</feature>
<feature type="helix" evidence="21">
    <location>
        <begin position="550"/>
        <end position="562"/>
    </location>
</feature>
<feature type="strand" evidence="21">
    <location>
        <begin position="575"/>
        <end position="578"/>
    </location>
</feature>
<feature type="strand" evidence="21">
    <location>
        <begin position="589"/>
        <end position="594"/>
    </location>
</feature>
<feature type="helix" evidence="21">
    <location>
        <begin position="601"/>
        <end position="609"/>
    </location>
</feature>
<feature type="helix" evidence="21">
    <location>
        <begin position="619"/>
        <end position="638"/>
    </location>
</feature>
<feature type="helix" evidence="21">
    <location>
        <begin position="648"/>
        <end position="650"/>
    </location>
</feature>
<feature type="strand" evidence="21">
    <location>
        <begin position="651"/>
        <end position="653"/>
    </location>
</feature>
<feature type="strand" evidence="21">
    <location>
        <begin position="659"/>
        <end position="661"/>
    </location>
</feature>
<feature type="helix" evidence="21">
    <location>
        <begin position="686"/>
        <end position="688"/>
    </location>
</feature>
<feature type="helix" evidence="21">
    <location>
        <begin position="691"/>
        <end position="696"/>
    </location>
</feature>
<feature type="helix" evidence="21">
    <location>
        <begin position="701"/>
        <end position="716"/>
    </location>
</feature>
<feature type="turn" evidence="21">
    <location>
        <begin position="722"/>
        <end position="725"/>
    </location>
</feature>
<feature type="helix" evidence="21">
    <location>
        <begin position="728"/>
        <end position="730"/>
    </location>
</feature>
<feature type="helix" evidence="21">
    <location>
        <begin position="731"/>
        <end position="736"/>
    </location>
</feature>
<feature type="helix" evidence="21">
    <location>
        <begin position="749"/>
        <end position="757"/>
    </location>
</feature>
<feature type="helix" evidence="21">
    <location>
        <begin position="763"/>
        <end position="765"/>
    </location>
</feature>
<feature type="helix" evidence="21">
    <location>
        <begin position="769"/>
        <end position="781"/>
    </location>
</feature>
<comment type="function">
    <text evidence="11 13 14 15">Receptor tyrosine kinase that transduces signals from the extracellular matrix into the cytoplasm by binding to several ligands including TULP1 or GAS6. Regulates many physiological processes including cell survival, migration and differentiation. Ligand binding at the cell surface induces dimerization and autophosphorylation of TYRO3 on its intracellular domain that provides docking sites for downstream signaling molecules. Following activation by ligand, interacts with PIK3R1 and thereby enhances PI3-kinase activity. Activates the AKT survival pathway, including nuclear translocation of NF-kappa-B and up-regulation of transcription of NF-kappa-B-regulated genes. TYRO3 signaling plays a role in various processes such as neuron protection from excitotoxic injury, platelet aggregation and cytoskeleton reorganization. Also plays an important role in inhibition of Toll-like receptors (TLRs)-mediated innate immune response by activating STAT1, which selectively induces production of suppressors of cytokine signaling SOCS1 and SOCS3.</text>
</comment>
<comment type="catalytic activity">
    <reaction evidence="8">
        <text>L-tyrosyl-[protein] + ATP = O-phospho-L-tyrosyl-[protein] + ADP + H(+)</text>
        <dbReference type="Rhea" id="RHEA:10596"/>
        <dbReference type="Rhea" id="RHEA-COMP:10136"/>
        <dbReference type="Rhea" id="RHEA-COMP:20101"/>
        <dbReference type="ChEBI" id="CHEBI:15378"/>
        <dbReference type="ChEBI" id="CHEBI:30616"/>
        <dbReference type="ChEBI" id="CHEBI:46858"/>
        <dbReference type="ChEBI" id="CHEBI:61978"/>
        <dbReference type="ChEBI" id="CHEBI:456216"/>
        <dbReference type="EC" id="2.7.10.1"/>
    </reaction>
</comment>
<comment type="subunit">
    <text evidence="1">Monomer and homodimer. Interacts (via N-terminus) with extracellular ligands TULP1 and GAS6. Interacts with PIK3R1; this interaction increases PI3-kinase activity (By similarity).</text>
</comment>
<comment type="subcellular location">
    <subcellularLocation>
        <location>Cell membrane</location>
        <topology>Single-pass type I membrane protein</topology>
    </subcellularLocation>
</comment>
<comment type="alternative products">
    <event type="alternative splicing"/>
    <isoform>
        <id>P55144-1</id>
        <name>3</name>
        <name>III</name>
        <sequence type="displayed"/>
    </isoform>
    <isoform>
        <id>P55144-2</id>
        <name>2</name>
        <name>II</name>
        <sequence type="described" ref="VSP_012549"/>
    </isoform>
    <isoform>
        <id>P55144-3</id>
        <name>1</name>
        <name>I</name>
        <name>B</name>
        <sequence type="described" ref="VSP_012548"/>
    </isoform>
</comment>
<comment type="tissue specificity">
    <text>Abundant in the brain and lower levels in other tissues.</text>
</comment>
<comment type="PTM">
    <text evidence="1">Autophosphorylated.</text>
</comment>
<comment type="disruption phenotype">
    <text evidence="10">knockout mice are fertile, but male animals that lack all three receptors TYRO3, AXL and MERTK produce no mature sperm.</text>
</comment>
<comment type="similarity">
    <text evidence="6">Belongs to the protein kinase superfamily. Tyr protein kinase family. AXL/UFO subfamily.</text>
</comment>
<comment type="sequence caution" evidence="19">
    <conflict type="erroneous initiation">
        <sequence resource="EMBL-CDS" id="AAB26942"/>
    </conflict>
</comment>
<comment type="sequence caution" evidence="19">
    <conflict type="erroneous initiation">
        <sequence resource="EMBL-CDS" id="CAA54995"/>
    </conflict>
</comment>
<keyword id="KW-0002">3D-structure</keyword>
<keyword id="KW-0025">Alternative splicing</keyword>
<keyword id="KW-0067">ATP-binding</keyword>
<keyword id="KW-0130">Cell adhesion</keyword>
<keyword id="KW-1003">Cell membrane</keyword>
<keyword id="KW-1015">Disulfide bond</keyword>
<keyword id="KW-0325">Glycoprotein</keyword>
<keyword id="KW-0393">Immunoglobulin domain</keyword>
<keyword id="KW-0418">Kinase</keyword>
<keyword id="KW-0472">Membrane</keyword>
<keyword id="KW-0547">Nucleotide-binding</keyword>
<keyword id="KW-0597">Phosphoprotein</keyword>
<keyword id="KW-0675">Receptor</keyword>
<keyword id="KW-1185">Reference proteome</keyword>
<keyword id="KW-0677">Repeat</keyword>
<keyword id="KW-0732">Signal</keyword>
<keyword id="KW-0808">Transferase</keyword>
<keyword id="KW-0812">Transmembrane</keyword>
<keyword id="KW-1133">Transmembrane helix</keyword>
<keyword id="KW-0829">Tyrosine-protein kinase</keyword>
<evidence type="ECO:0000250" key="1"/>
<evidence type="ECO:0000250" key="2">
    <source>
        <dbReference type="UniProtKB" id="P55146"/>
    </source>
</evidence>
<evidence type="ECO:0000250" key="3">
    <source>
        <dbReference type="UniProtKB" id="Q06418"/>
    </source>
</evidence>
<evidence type="ECO:0000255" key="4"/>
<evidence type="ECO:0000255" key="5">
    <source>
        <dbReference type="PROSITE-ProRule" id="PRU00114"/>
    </source>
</evidence>
<evidence type="ECO:0000255" key="6">
    <source>
        <dbReference type="PROSITE-ProRule" id="PRU00159"/>
    </source>
</evidence>
<evidence type="ECO:0000255" key="7">
    <source>
        <dbReference type="PROSITE-ProRule" id="PRU00316"/>
    </source>
</evidence>
<evidence type="ECO:0000255" key="8">
    <source>
        <dbReference type="PROSITE-ProRule" id="PRU10028"/>
    </source>
</evidence>
<evidence type="ECO:0000256" key="9">
    <source>
        <dbReference type="SAM" id="MobiDB-lite"/>
    </source>
</evidence>
<evidence type="ECO:0000269" key="10">
    <source>
    </source>
</evidence>
<evidence type="ECO:0000269" key="11">
    <source>
    </source>
</evidence>
<evidence type="ECO:0000269" key="12">
    <source>
    </source>
</evidence>
<evidence type="ECO:0000269" key="13">
    <source>
    </source>
</evidence>
<evidence type="ECO:0000269" key="14">
    <source>
    </source>
</evidence>
<evidence type="ECO:0000269" key="15">
    <source>
    </source>
</evidence>
<evidence type="ECO:0000303" key="16">
    <source>
    </source>
</evidence>
<evidence type="ECO:0000303" key="17">
    <source>
    </source>
</evidence>
<evidence type="ECO:0000303" key="18">
    <source>
    </source>
</evidence>
<evidence type="ECO:0000305" key="19"/>
<evidence type="ECO:0007744" key="20">
    <source>
    </source>
</evidence>
<evidence type="ECO:0007829" key="21">
    <source>
        <dbReference type="PDB" id="3QUP"/>
    </source>
</evidence>
<name>TYRO3_MOUSE</name>
<organism>
    <name type="scientific">Mus musculus</name>
    <name type="common">Mouse</name>
    <dbReference type="NCBI Taxonomy" id="10090"/>
    <lineage>
        <taxon>Eukaryota</taxon>
        <taxon>Metazoa</taxon>
        <taxon>Chordata</taxon>
        <taxon>Craniata</taxon>
        <taxon>Vertebrata</taxon>
        <taxon>Euteleostomi</taxon>
        <taxon>Mammalia</taxon>
        <taxon>Eutheria</taxon>
        <taxon>Euarchontoglires</taxon>
        <taxon>Glires</taxon>
        <taxon>Rodentia</taxon>
        <taxon>Myomorpha</taxon>
        <taxon>Muroidea</taxon>
        <taxon>Muridae</taxon>
        <taxon>Murinae</taxon>
        <taxon>Mus</taxon>
        <taxon>Mus</taxon>
    </lineage>
</organism>
<proteinExistence type="evidence at protein level"/>
<dbReference type="EC" id="2.7.10.1"/>
<dbReference type="EMBL" id="U05683">
    <property type="protein sequence ID" value="AAA19237.1"/>
    <property type="molecule type" value="mRNA"/>
</dbReference>
<dbReference type="EMBL" id="U18933">
    <property type="protein sequence ID" value="AAC52148.1"/>
    <property type="molecule type" value="mRNA"/>
</dbReference>
<dbReference type="EMBL" id="X78103">
    <property type="protein sequence ID" value="CAA54995.1"/>
    <property type="status" value="ALT_INIT"/>
    <property type="molecule type" value="mRNA"/>
</dbReference>
<dbReference type="EMBL" id="U18342">
    <property type="protein sequence ID" value="AAB26942.1"/>
    <property type="status" value="ALT_INIT"/>
    <property type="molecule type" value="mRNA"/>
</dbReference>
<dbReference type="EMBL" id="U18343">
    <property type="protein sequence ID" value="AAB26943.1"/>
    <property type="molecule type" value="mRNA"/>
</dbReference>
<dbReference type="EMBL" id="AB000826">
    <property type="protein sequence ID" value="BAA19191.1"/>
    <property type="molecule type" value="Genomic_DNA"/>
</dbReference>
<dbReference type="EMBL" id="AB000827">
    <property type="protein sequence ID" value="BAA19192.1"/>
    <property type="molecule type" value="mRNA"/>
</dbReference>
<dbReference type="EMBL" id="AB000828">
    <property type="protein sequence ID" value="BAA19193.1"/>
    <property type="molecule type" value="mRNA"/>
</dbReference>
<dbReference type="EMBL" id="AK141198">
    <property type="protein sequence ID" value="BAE24581.1"/>
    <property type="molecule type" value="mRNA"/>
</dbReference>
<dbReference type="EMBL" id="AL844896">
    <property type="status" value="NOT_ANNOTATED_CDS"/>
    <property type="molecule type" value="Genomic_DNA"/>
</dbReference>
<dbReference type="EMBL" id="BC066058">
    <property type="protein sequence ID" value="AAH66058.1"/>
    <property type="molecule type" value="mRNA"/>
</dbReference>
<dbReference type="EMBL" id="BC082325">
    <property type="protein sequence ID" value="AAH82325.1"/>
    <property type="molecule type" value="mRNA"/>
</dbReference>
<dbReference type="EMBL" id="U23721">
    <property type="protein sequence ID" value="AAC52215.1"/>
    <property type="molecule type" value="Genomic_DNA"/>
</dbReference>
<dbReference type="EMBL" id="U23718">
    <property type="protein sequence ID" value="AAC52215.1"/>
    <property type="status" value="JOINED"/>
    <property type="molecule type" value="Genomic_DNA"/>
</dbReference>
<dbReference type="EMBL" id="U23721">
    <property type="protein sequence ID" value="AAC52216.1"/>
    <property type="molecule type" value="Genomic_DNA"/>
</dbReference>
<dbReference type="EMBL" id="U23719">
    <property type="protein sequence ID" value="AAC52216.1"/>
    <property type="status" value="JOINED"/>
    <property type="molecule type" value="Genomic_DNA"/>
</dbReference>
<dbReference type="EMBL" id="U23721">
    <property type="protein sequence ID" value="AAC52217.1"/>
    <property type="molecule type" value="Genomic_DNA"/>
</dbReference>
<dbReference type="EMBL" id="U23720">
    <property type="protein sequence ID" value="AAC52217.1"/>
    <property type="status" value="JOINED"/>
    <property type="molecule type" value="Genomic_DNA"/>
</dbReference>
<dbReference type="CCDS" id="CCDS16611.1">
    <molecule id="P55144-1"/>
</dbReference>
<dbReference type="CCDS" id="CCDS71119.1">
    <molecule id="P55144-3"/>
</dbReference>
<dbReference type="PIR" id="B53743">
    <property type="entry name" value="B53743"/>
</dbReference>
<dbReference type="PIR" id="I48862">
    <property type="entry name" value="I48862"/>
</dbReference>
<dbReference type="PIR" id="I49152">
    <property type="entry name" value="I49152"/>
</dbReference>
<dbReference type="RefSeq" id="NP_001277729.1">
    <molecule id="P55144-3"/>
    <property type="nucleotide sequence ID" value="NM_001290800.2"/>
</dbReference>
<dbReference type="RefSeq" id="NP_062265.2">
    <molecule id="P55144-1"/>
    <property type="nucleotide sequence ID" value="NM_019392.3"/>
</dbReference>
<dbReference type="RefSeq" id="XP_017172636.1">
    <property type="nucleotide sequence ID" value="XM_017317147.1"/>
</dbReference>
<dbReference type="PDB" id="3QUP">
    <property type="method" value="X-ray"/>
    <property type="resolution" value="1.90 A"/>
    <property type="chains" value="A=485-800"/>
</dbReference>
<dbReference type="PDB" id="4FEQ">
    <property type="method" value="X-ray"/>
    <property type="resolution" value="2.20 A"/>
    <property type="chains" value="A=485-800"/>
</dbReference>
<dbReference type="PDB" id="4FF8">
    <property type="method" value="X-ray"/>
    <property type="resolution" value="2.40 A"/>
    <property type="chains" value="A=485-800"/>
</dbReference>
<dbReference type="PDBsum" id="3QUP"/>
<dbReference type="PDBsum" id="4FEQ"/>
<dbReference type="PDBsum" id="4FF8"/>
<dbReference type="SMR" id="P55144"/>
<dbReference type="BioGRID" id="204395">
    <property type="interactions" value="1"/>
</dbReference>
<dbReference type="FunCoup" id="P55144">
    <property type="interactions" value="127"/>
</dbReference>
<dbReference type="STRING" id="10090.ENSMUSP00000028763"/>
<dbReference type="GlyCosmos" id="P55144">
    <property type="glycosylation" value="8 sites, No reported glycans"/>
</dbReference>
<dbReference type="GlyGen" id="P55144">
    <property type="glycosylation" value="8 sites, 4 N-linked glycans (5 sites)"/>
</dbReference>
<dbReference type="iPTMnet" id="P55144"/>
<dbReference type="PhosphoSitePlus" id="P55144"/>
<dbReference type="SwissPalm" id="P55144"/>
<dbReference type="PaxDb" id="10090-ENSMUSP00000028763"/>
<dbReference type="ProteomicsDB" id="298047">
    <molecule id="P55144-1"/>
</dbReference>
<dbReference type="ProteomicsDB" id="298048">
    <molecule id="P55144-2"/>
</dbReference>
<dbReference type="ProteomicsDB" id="298049">
    <molecule id="P55144-3"/>
</dbReference>
<dbReference type="Antibodypedia" id="2066">
    <property type="antibodies" value="783 antibodies from 35 providers"/>
</dbReference>
<dbReference type="DNASU" id="22174"/>
<dbReference type="Ensembl" id="ENSMUST00000028763.10">
    <molecule id="P55144-1"/>
    <property type="protein sequence ID" value="ENSMUSP00000028763.10"/>
    <property type="gene ID" value="ENSMUSG00000027298.18"/>
</dbReference>
<dbReference type="Ensembl" id="ENSMUST00000110783.8">
    <molecule id="P55144-3"/>
    <property type="protein sequence ID" value="ENSMUSP00000106410.2"/>
    <property type="gene ID" value="ENSMUSG00000027298.18"/>
</dbReference>
<dbReference type="GeneID" id="22174"/>
<dbReference type="KEGG" id="mmu:22174"/>
<dbReference type="UCSC" id="uc008lup.2">
    <molecule id="P55144-3"/>
    <property type="organism name" value="mouse"/>
</dbReference>
<dbReference type="UCSC" id="uc008luq.1">
    <molecule id="P55144-1"/>
    <property type="organism name" value="mouse"/>
</dbReference>
<dbReference type="AGR" id="MGI:104294"/>
<dbReference type="CTD" id="7301"/>
<dbReference type="MGI" id="MGI:104294">
    <property type="gene designation" value="Tyro3"/>
</dbReference>
<dbReference type="VEuPathDB" id="HostDB:ENSMUSG00000027298"/>
<dbReference type="eggNOG" id="ENOG502QRYR">
    <property type="taxonomic scope" value="Eukaryota"/>
</dbReference>
<dbReference type="GeneTree" id="ENSGT00940000155879"/>
<dbReference type="HOGENOM" id="CLU_015796_0_0_1"/>
<dbReference type="InParanoid" id="P55144"/>
<dbReference type="OMA" id="DCREDIY"/>
<dbReference type="OrthoDB" id="4062651at2759"/>
<dbReference type="PhylomeDB" id="P55144"/>
<dbReference type="TreeFam" id="TF317402"/>
<dbReference type="BRENDA" id="2.7.10.1">
    <property type="organism ID" value="3474"/>
</dbReference>
<dbReference type="BioGRID-ORCS" id="22174">
    <property type="hits" value="2 hits in 78 CRISPR screens"/>
</dbReference>
<dbReference type="ChiTaRS" id="Tyro3">
    <property type="organism name" value="mouse"/>
</dbReference>
<dbReference type="EvolutionaryTrace" id="P55144"/>
<dbReference type="PRO" id="PR:P55144"/>
<dbReference type="Proteomes" id="UP000000589">
    <property type="component" value="Chromosome 2"/>
</dbReference>
<dbReference type="RNAct" id="P55144">
    <property type="molecule type" value="protein"/>
</dbReference>
<dbReference type="Bgee" id="ENSMUSG00000027298">
    <property type="expression patterns" value="Expressed in primary motor cortex and 213 other cell types or tissues"/>
</dbReference>
<dbReference type="GO" id="GO:0009986">
    <property type="term" value="C:cell surface"/>
    <property type="evidence" value="ECO:0007669"/>
    <property type="project" value="Ensembl"/>
</dbReference>
<dbReference type="GO" id="GO:0005789">
    <property type="term" value="C:endoplasmic reticulum membrane"/>
    <property type="evidence" value="ECO:0000250"/>
    <property type="project" value="UniProtKB"/>
</dbReference>
<dbReference type="GO" id="GO:0005635">
    <property type="term" value="C:nuclear envelope"/>
    <property type="evidence" value="ECO:0000250"/>
    <property type="project" value="UniProtKB"/>
</dbReference>
<dbReference type="GO" id="GO:0005634">
    <property type="term" value="C:nucleus"/>
    <property type="evidence" value="ECO:0000250"/>
    <property type="project" value="UniProtKB"/>
</dbReference>
<dbReference type="GO" id="GO:0005886">
    <property type="term" value="C:plasma membrane"/>
    <property type="evidence" value="ECO:0007669"/>
    <property type="project" value="UniProtKB-SubCell"/>
</dbReference>
<dbReference type="GO" id="GO:0005524">
    <property type="term" value="F:ATP binding"/>
    <property type="evidence" value="ECO:0007669"/>
    <property type="project" value="UniProtKB-KW"/>
</dbReference>
<dbReference type="GO" id="GO:0043548">
    <property type="term" value="F:phosphatidylinositol 3-kinase binding"/>
    <property type="evidence" value="ECO:0000250"/>
    <property type="project" value="UniProtKB"/>
</dbReference>
<dbReference type="GO" id="GO:0004713">
    <property type="term" value="F:protein tyrosine kinase activity"/>
    <property type="evidence" value="ECO:0000250"/>
    <property type="project" value="UniProtKB"/>
</dbReference>
<dbReference type="GO" id="GO:0004714">
    <property type="term" value="F:transmembrane receptor protein tyrosine kinase activity"/>
    <property type="evidence" value="ECO:0007669"/>
    <property type="project" value="UniProtKB-EC"/>
</dbReference>
<dbReference type="GO" id="GO:0001618">
    <property type="term" value="F:virus receptor activity"/>
    <property type="evidence" value="ECO:0007669"/>
    <property type="project" value="Ensembl"/>
</dbReference>
<dbReference type="GO" id="GO:0043277">
    <property type="term" value="P:apoptotic cell clearance"/>
    <property type="evidence" value="ECO:0000316"/>
    <property type="project" value="UniProtKB"/>
</dbReference>
<dbReference type="GO" id="GO:0051649">
    <property type="term" value="P:establishment of localization in cell"/>
    <property type="evidence" value="ECO:0000315"/>
    <property type="project" value="MGI"/>
</dbReference>
<dbReference type="GO" id="GO:0021885">
    <property type="term" value="P:forebrain cell migration"/>
    <property type="evidence" value="ECO:0000316"/>
    <property type="project" value="MGI"/>
</dbReference>
<dbReference type="GO" id="GO:0046649">
    <property type="term" value="P:lymphocyte activation"/>
    <property type="evidence" value="ECO:0000316"/>
    <property type="project" value="MGI"/>
</dbReference>
<dbReference type="GO" id="GO:0001779">
    <property type="term" value="P:natural killer cell differentiation"/>
    <property type="evidence" value="ECO:0000316"/>
    <property type="project" value="MGI"/>
</dbReference>
<dbReference type="GO" id="GO:0050728">
    <property type="term" value="P:negative regulation of inflammatory response"/>
    <property type="evidence" value="ECO:0000316"/>
    <property type="project" value="UniProtKB"/>
</dbReference>
<dbReference type="GO" id="GO:0045824">
    <property type="term" value="P:negative regulation of innate immune response"/>
    <property type="evidence" value="ECO:0000316"/>
    <property type="project" value="UniProtKB"/>
</dbReference>
<dbReference type="GO" id="GO:0051250">
    <property type="term" value="P:negative regulation of lymphocyte activation"/>
    <property type="evidence" value="ECO:0000316"/>
    <property type="project" value="MGI"/>
</dbReference>
<dbReference type="GO" id="GO:0043524">
    <property type="term" value="P:negative regulation of neuron apoptotic process"/>
    <property type="evidence" value="ECO:0000316"/>
    <property type="project" value="MGI"/>
</dbReference>
<dbReference type="GO" id="GO:0034122">
    <property type="term" value="P:negative regulation of toll-like receptor signaling pathway"/>
    <property type="evidence" value="ECO:0000316"/>
    <property type="project" value="UniProtKB"/>
</dbReference>
<dbReference type="GO" id="GO:0051402">
    <property type="term" value="P:neuron apoptotic process"/>
    <property type="evidence" value="ECO:0000316"/>
    <property type="project" value="MGI"/>
</dbReference>
<dbReference type="GO" id="GO:0070050">
    <property type="term" value="P:neuron cellular homeostasis"/>
    <property type="evidence" value="ECO:0000315"/>
    <property type="project" value="UniProtKB"/>
</dbReference>
<dbReference type="GO" id="GO:0001764">
    <property type="term" value="P:neuron migration"/>
    <property type="evidence" value="ECO:0000316"/>
    <property type="project" value="MGI"/>
</dbReference>
<dbReference type="GO" id="GO:0007218">
    <property type="term" value="P:neuropeptide signaling pathway"/>
    <property type="evidence" value="ECO:0000315"/>
    <property type="project" value="MGI"/>
</dbReference>
<dbReference type="GO" id="GO:0042698">
    <property type="term" value="P:ovulation cycle"/>
    <property type="evidence" value="ECO:0000316"/>
    <property type="project" value="MGI"/>
</dbReference>
<dbReference type="GO" id="GO:0030168">
    <property type="term" value="P:platelet activation"/>
    <property type="evidence" value="ECO:0000315"/>
    <property type="project" value="MGI"/>
</dbReference>
<dbReference type="GO" id="GO:0070527">
    <property type="term" value="P:platelet aggregation"/>
    <property type="evidence" value="ECO:0000315"/>
    <property type="project" value="UniProtKB"/>
</dbReference>
<dbReference type="GO" id="GO:0051897">
    <property type="term" value="P:positive regulation of phosphatidylinositol 3-kinase/protein kinase B signal transduction"/>
    <property type="evidence" value="ECO:0000315"/>
    <property type="project" value="UniProtKB"/>
</dbReference>
<dbReference type="GO" id="GO:1903902">
    <property type="term" value="P:positive regulation of viral life cycle"/>
    <property type="evidence" value="ECO:0007669"/>
    <property type="project" value="Ensembl"/>
</dbReference>
<dbReference type="GO" id="GO:0032940">
    <property type="term" value="P:secretion by cell"/>
    <property type="evidence" value="ECO:0000315"/>
    <property type="project" value="MGI"/>
</dbReference>
<dbReference type="GO" id="GO:0007283">
    <property type="term" value="P:spermatogenesis"/>
    <property type="evidence" value="ECO:0000316"/>
    <property type="project" value="UniProtKB"/>
</dbReference>
<dbReference type="GO" id="GO:0034446">
    <property type="term" value="P:substrate adhesion-dependent cell spreading"/>
    <property type="evidence" value="ECO:0000315"/>
    <property type="project" value="MGI"/>
</dbReference>
<dbReference type="GO" id="GO:0060068">
    <property type="term" value="P:vagina development"/>
    <property type="evidence" value="ECO:0000316"/>
    <property type="project" value="MGI"/>
</dbReference>
<dbReference type="CDD" id="cd00063">
    <property type="entry name" value="FN3"/>
    <property type="match status" value="2"/>
</dbReference>
<dbReference type="CDD" id="cd05074">
    <property type="entry name" value="PTKc_Tyro3"/>
    <property type="match status" value="1"/>
</dbReference>
<dbReference type="FunFam" id="1.10.510.10:FF:000089">
    <property type="entry name" value="Tyrosine-protein kinase receptor TYRO3"/>
    <property type="match status" value="1"/>
</dbReference>
<dbReference type="FunFam" id="2.60.40.10:FF:000296">
    <property type="entry name" value="Tyrosine-protein kinase receptor TYRO3"/>
    <property type="match status" value="1"/>
</dbReference>
<dbReference type="FunFam" id="2.60.40.10:FF:000484">
    <property type="entry name" value="Tyrosine-protein kinase receptor TYRO3"/>
    <property type="match status" value="1"/>
</dbReference>
<dbReference type="FunFam" id="2.60.40.10:FF:000605">
    <property type="entry name" value="Tyrosine-protein kinase receptor TYRO3"/>
    <property type="match status" value="1"/>
</dbReference>
<dbReference type="FunFam" id="2.60.40.10:FF:000780">
    <property type="entry name" value="Tyrosine-protein kinase receptor TYRO3"/>
    <property type="match status" value="1"/>
</dbReference>
<dbReference type="FunFam" id="3.30.200.20:FF:000111">
    <property type="entry name" value="Tyrosine-protein kinase receptor TYRO3"/>
    <property type="match status" value="1"/>
</dbReference>
<dbReference type="Gene3D" id="2.60.40.10">
    <property type="entry name" value="Immunoglobulins"/>
    <property type="match status" value="4"/>
</dbReference>
<dbReference type="Gene3D" id="3.30.200.20">
    <property type="entry name" value="Phosphorylase Kinase, domain 1"/>
    <property type="match status" value="1"/>
</dbReference>
<dbReference type="Gene3D" id="1.10.510.10">
    <property type="entry name" value="Transferase(Phosphotransferase) domain 1"/>
    <property type="match status" value="1"/>
</dbReference>
<dbReference type="InterPro" id="IPR003961">
    <property type="entry name" value="FN3_dom"/>
</dbReference>
<dbReference type="InterPro" id="IPR036116">
    <property type="entry name" value="FN3_sf"/>
</dbReference>
<dbReference type="InterPro" id="IPR007110">
    <property type="entry name" value="Ig-like_dom"/>
</dbReference>
<dbReference type="InterPro" id="IPR036179">
    <property type="entry name" value="Ig-like_dom_sf"/>
</dbReference>
<dbReference type="InterPro" id="IPR013783">
    <property type="entry name" value="Ig-like_fold"/>
</dbReference>
<dbReference type="InterPro" id="IPR013098">
    <property type="entry name" value="Ig_I-set"/>
</dbReference>
<dbReference type="InterPro" id="IPR003599">
    <property type="entry name" value="Ig_sub"/>
</dbReference>
<dbReference type="InterPro" id="IPR003598">
    <property type="entry name" value="Ig_sub2"/>
</dbReference>
<dbReference type="InterPro" id="IPR011009">
    <property type="entry name" value="Kinase-like_dom_sf"/>
</dbReference>
<dbReference type="InterPro" id="IPR000719">
    <property type="entry name" value="Prot_kinase_dom"/>
</dbReference>
<dbReference type="InterPro" id="IPR017441">
    <property type="entry name" value="Protein_kinase_ATP_BS"/>
</dbReference>
<dbReference type="InterPro" id="IPR050122">
    <property type="entry name" value="RTK"/>
</dbReference>
<dbReference type="InterPro" id="IPR001245">
    <property type="entry name" value="Ser-Thr/Tyr_kinase_cat_dom"/>
</dbReference>
<dbReference type="InterPro" id="IPR008266">
    <property type="entry name" value="Tyr_kinase_AS"/>
</dbReference>
<dbReference type="InterPro" id="IPR020635">
    <property type="entry name" value="Tyr_kinase_cat_dom"/>
</dbReference>
<dbReference type="PANTHER" id="PTHR24416">
    <property type="entry name" value="TYROSINE-PROTEIN KINASE RECEPTOR"/>
    <property type="match status" value="1"/>
</dbReference>
<dbReference type="PANTHER" id="PTHR24416:SF279">
    <property type="entry name" value="TYROSINE-PROTEIN KINASE RECEPTOR TYRO3"/>
    <property type="match status" value="1"/>
</dbReference>
<dbReference type="Pfam" id="PF00041">
    <property type="entry name" value="fn3"/>
    <property type="match status" value="1"/>
</dbReference>
<dbReference type="Pfam" id="PF07679">
    <property type="entry name" value="I-set"/>
    <property type="match status" value="1"/>
</dbReference>
<dbReference type="Pfam" id="PF07714">
    <property type="entry name" value="PK_Tyr_Ser-Thr"/>
    <property type="match status" value="1"/>
</dbReference>
<dbReference type="PIRSF" id="PIRSF000615">
    <property type="entry name" value="TyrPK_CSF1-R"/>
    <property type="match status" value="1"/>
</dbReference>
<dbReference type="PRINTS" id="PR00109">
    <property type="entry name" value="TYRKINASE"/>
</dbReference>
<dbReference type="SMART" id="SM00060">
    <property type="entry name" value="FN3"/>
    <property type="match status" value="2"/>
</dbReference>
<dbReference type="SMART" id="SM00409">
    <property type="entry name" value="IG"/>
    <property type="match status" value="2"/>
</dbReference>
<dbReference type="SMART" id="SM00408">
    <property type="entry name" value="IGc2"/>
    <property type="match status" value="2"/>
</dbReference>
<dbReference type="SMART" id="SM00219">
    <property type="entry name" value="TyrKc"/>
    <property type="match status" value="1"/>
</dbReference>
<dbReference type="SUPFAM" id="SSF49265">
    <property type="entry name" value="Fibronectin type III"/>
    <property type="match status" value="1"/>
</dbReference>
<dbReference type="SUPFAM" id="SSF48726">
    <property type="entry name" value="Immunoglobulin"/>
    <property type="match status" value="2"/>
</dbReference>
<dbReference type="SUPFAM" id="SSF56112">
    <property type="entry name" value="Protein kinase-like (PK-like)"/>
    <property type="match status" value="1"/>
</dbReference>
<dbReference type="PROSITE" id="PS50853">
    <property type="entry name" value="FN3"/>
    <property type="match status" value="2"/>
</dbReference>
<dbReference type="PROSITE" id="PS50835">
    <property type="entry name" value="IG_LIKE"/>
    <property type="match status" value="2"/>
</dbReference>
<dbReference type="PROSITE" id="PS00107">
    <property type="entry name" value="PROTEIN_KINASE_ATP"/>
    <property type="match status" value="1"/>
</dbReference>
<dbReference type="PROSITE" id="PS50011">
    <property type="entry name" value="PROTEIN_KINASE_DOM"/>
    <property type="match status" value="1"/>
</dbReference>
<dbReference type="PROSITE" id="PS00109">
    <property type="entry name" value="PROTEIN_KINASE_TYR"/>
    <property type="match status" value="1"/>
</dbReference>
<gene>
    <name type="primary">Tyro3</name>
    <name type="synonym">Dtk</name>
    <name type="synonym">Rse</name>
    <name type="synonym">Tif</name>
</gene>
<reference key="1">
    <citation type="journal article" date="1994" name="J. Biol. Chem.">
        <title>RSE, a novel receptor-type tyrosine kinase with homology to Axl/Ufo, is expressed at high levels in the brain.</title>
        <authorList>
            <person name="Mark M.R."/>
            <person name="Scadden D.T."/>
            <person name="Wang Z."/>
            <person name="Gu Q."/>
            <person name="Goddard A."/>
            <person name="Godowski P.J."/>
        </authorList>
    </citation>
    <scope>NUCLEOTIDE SEQUENCE [MRNA] (ISOFORM 3)</scope>
    <source>
        <tissue>Brain</tissue>
    </source>
</reference>
<reference key="2">
    <citation type="journal article" date="1994" name="Growth Factors">
        <title>Isolation of a receptor tyrosine kinase (DTK) from embryonic stem cells: structure, genetic mapping and analysis of expression.</title>
        <authorList>
            <person name="Crosier P.S."/>
            <person name="Lewis P.M."/>
            <person name="Hall L.R."/>
            <person name="Vitas M.R."/>
            <person name="Morris C.M."/>
            <person name="Beier D.R."/>
            <person name="Wood C.R."/>
            <person name="Crosier K.E."/>
        </authorList>
    </citation>
    <scope>NUCLEOTIDE SEQUENCE [MRNA] (ISOFORM 3)</scope>
    <source>
        <tissue>Brain</tissue>
    </source>
</reference>
<reference key="3">
    <citation type="journal article" date="1994" name="Oncogene">
        <title>Structure, expression, and activity of Tyro 3, a neural adhesion-related receptor tyrosine kinase.</title>
        <authorList>
            <person name="Lai C."/>
            <person name="Gore M."/>
            <person name="Lemke G."/>
        </authorList>
    </citation>
    <scope>NUCLEOTIDE SEQUENCE [MRNA] (ISOFORM 3)</scope>
    <source>
        <strain>C57BL/6J</strain>
    </source>
</reference>
<reference key="4">
    <citation type="journal article" date="1994" name="Oncogene">
        <title>brt, a mouse gene encoding a novel receptor-type protein-tyrosine kinase, is preferentially expressed in the brain.</title>
        <authorList>
            <person name="Fujimoto J."/>
            <person name="Yamamoto T."/>
        </authorList>
    </citation>
    <scope>NUCLEOTIDE SEQUENCE [MRNA] (ISOFORM 1)</scope>
    <source>
        <strain>BALB/cJ</strain>
        <tissue>Brain</tissue>
        <tissue>Liver</tissue>
    </source>
</reference>
<reference key="5">
    <citation type="journal article" date="1994" name="Oncogene">
        <title>Cloning of the cDNA for a novel receptor tyrosine kinase, Sky, predominantly expressed in brain.</title>
        <authorList>
            <person name="Ohashi K."/>
            <person name="Mizuno K."/>
            <person name="Kuma K."/>
            <person name="Miyata T."/>
            <person name="Nakamura T."/>
        </authorList>
    </citation>
    <scope>NUCLEOTIDE SEQUENCE (ISOFORM 1)</scope>
    <source>
        <strain>BALB/cJ</strain>
        <tissue>Brain</tissue>
    </source>
</reference>
<reference key="6">
    <citation type="journal article" date="1995" name="Brain Res. Mol. Brain Res.">
        <title>Isolation and expression analysis of tyro3, a murine growth factor receptor tyrosine kinase preferentially expressed in adult brain.</title>
        <authorList>
            <person name="Schulz N."/>
            <person name="Paulhiac C."/>
            <person name="Lee L."/>
            <person name="Zhou R."/>
        </authorList>
    </citation>
    <scope>NUCLEOTIDE SEQUENCE [MRNA] (ISOFORMS 1 AND 3)</scope>
    <source>
        <strain>BALB/cJ</strain>
        <tissue>Brain</tissue>
    </source>
</reference>
<reference key="7">
    <citation type="journal article" date="1996" name="J. Biochem.">
        <title>Structure and expression of a murine homologue of sky receptor tyrosine kinase.</title>
        <authorList>
            <person name="Sasaki M."/>
            <person name="Enami J."/>
        </authorList>
    </citation>
    <scope>NUCLEOTIDE SEQUENCE [GENOMIC DNA / MRNA] (ISOFORMS 1; 2 AND 3)</scope>
    <source>
        <strain>BALB/cJ</strain>
        <tissue>Brain</tissue>
    </source>
</reference>
<reference key="8">
    <citation type="journal article" date="2005" name="Science">
        <title>The transcriptional landscape of the mammalian genome.</title>
        <authorList>
            <person name="Carninci P."/>
            <person name="Kasukawa T."/>
            <person name="Katayama S."/>
            <person name="Gough J."/>
            <person name="Frith M.C."/>
            <person name="Maeda N."/>
            <person name="Oyama R."/>
            <person name="Ravasi T."/>
            <person name="Lenhard B."/>
            <person name="Wells C."/>
            <person name="Kodzius R."/>
            <person name="Shimokawa K."/>
            <person name="Bajic V.B."/>
            <person name="Brenner S.E."/>
            <person name="Batalov S."/>
            <person name="Forrest A.R."/>
            <person name="Zavolan M."/>
            <person name="Davis M.J."/>
            <person name="Wilming L.G."/>
            <person name="Aidinis V."/>
            <person name="Allen J.E."/>
            <person name="Ambesi-Impiombato A."/>
            <person name="Apweiler R."/>
            <person name="Aturaliya R.N."/>
            <person name="Bailey T.L."/>
            <person name="Bansal M."/>
            <person name="Baxter L."/>
            <person name="Beisel K.W."/>
            <person name="Bersano T."/>
            <person name="Bono H."/>
            <person name="Chalk A.M."/>
            <person name="Chiu K.P."/>
            <person name="Choudhary V."/>
            <person name="Christoffels A."/>
            <person name="Clutterbuck D.R."/>
            <person name="Crowe M.L."/>
            <person name="Dalla E."/>
            <person name="Dalrymple B.P."/>
            <person name="de Bono B."/>
            <person name="Della Gatta G."/>
            <person name="di Bernardo D."/>
            <person name="Down T."/>
            <person name="Engstrom P."/>
            <person name="Fagiolini M."/>
            <person name="Faulkner G."/>
            <person name="Fletcher C.F."/>
            <person name="Fukushima T."/>
            <person name="Furuno M."/>
            <person name="Futaki S."/>
            <person name="Gariboldi M."/>
            <person name="Georgii-Hemming P."/>
            <person name="Gingeras T.R."/>
            <person name="Gojobori T."/>
            <person name="Green R.E."/>
            <person name="Gustincich S."/>
            <person name="Harbers M."/>
            <person name="Hayashi Y."/>
            <person name="Hensch T.K."/>
            <person name="Hirokawa N."/>
            <person name="Hill D."/>
            <person name="Huminiecki L."/>
            <person name="Iacono M."/>
            <person name="Ikeo K."/>
            <person name="Iwama A."/>
            <person name="Ishikawa T."/>
            <person name="Jakt M."/>
            <person name="Kanapin A."/>
            <person name="Katoh M."/>
            <person name="Kawasawa Y."/>
            <person name="Kelso J."/>
            <person name="Kitamura H."/>
            <person name="Kitano H."/>
            <person name="Kollias G."/>
            <person name="Krishnan S.P."/>
            <person name="Kruger A."/>
            <person name="Kummerfeld S.K."/>
            <person name="Kurochkin I.V."/>
            <person name="Lareau L.F."/>
            <person name="Lazarevic D."/>
            <person name="Lipovich L."/>
            <person name="Liu J."/>
            <person name="Liuni S."/>
            <person name="McWilliam S."/>
            <person name="Madan Babu M."/>
            <person name="Madera M."/>
            <person name="Marchionni L."/>
            <person name="Matsuda H."/>
            <person name="Matsuzawa S."/>
            <person name="Miki H."/>
            <person name="Mignone F."/>
            <person name="Miyake S."/>
            <person name="Morris K."/>
            <person name="Mottagui-Tabar S."/>
            <person name="Mulder N."/>
            <person name="Nakano N."/>
            <person name="Nakauchi H."/>
            <person name="Ng P."/>
            <person name="Nilsson R."/>
            <person name="Nishiguchi S."/>
            <person name="Nishikawa S."/>
            <person name="Nori F."/>
            <person name="Ohara O."/>
            <person name="Okazaki Y."/>
            <person name="Orlando V."/>
            <person name="Pang K.C."/>
            <person name="Pavan W.J."/>
            <person name="Pavesi G."/>
            <person name="Pesole G."/>
            <person name="Petrovsky N."/>
            <person name="Piazza S."/>
            <person name="Reed J."/>
            <person name="Reid J.F."/>
            <person name="Ring B.Z."/>
            <person name="Ringwald M."/>
            <person name="Rost B."/>
            <person name="Ruan Y."/>
            <person name="Salzberg S.L."/>
            <person name="Sandelin A."/>
            <person name="Schneider C."/>
            <person name="Schoenbach C."/>
            <person name="Sekiguchi K."/>
            <person name="Semple C.A."/>
            <person name="Seno S."/>
            <person name="Sessa L."/>
            <person name="Sheng Y."/>
            <person name="Shibata Y."/>
            <person name="Shimada H."/>
            <person name="Shimada K."/>
            <person name="Silva D."/>
            <person name="Sinclair B."/>
            <person name="Sperling S."/>
            <person name="Stupka E."/>
            <person name="Sugiura K."/>
            <person name="Sultana R."/>
            <person name="Takenaka Y."/>
            <person name="Taki K."/>
            <person name="Tammoja K."/>
            <person name="Tan S.L."/>
            <person name="Tang S."/>
            <person name="Taylor M.S."/>
            <person name="Tegner J."/>
            <person name="Teichmann S.A."/>
            <person name="Ueda H.R."/>
            <person name="van Nimwegen E."/>
            <person name="Verardo R."/>
            <person name="Wei C.L."/>
            <person name="Yagi K."/>
            <person name="Yamanishi H."/>
            <person name="Zabarovsky E."/>
            <person name="Zhu S."/>
            <person name="Zimmer A."/>
            <person name="Hide W."/>
            <person name="Bult C."/>
            <person name="Grimmond S.M."/>
            <person name="Teasdale R.D."/>
            <person name="Liu E.T."/>
            <person name="Brusic V."/>
            <person name="Quackenbush J."/>
            <person name="Wahlestedt C."/>
            <person name="Mattick J.S."/>
            <person name="Hume D.A."/>
            <person name="Kai C."/>
            <person name="Sasaki D."/>
            <person name="Tomaru Y."/>
            <person name="Fukuda S."/>
            <person name="Kanamori-Katayama M."/>
            <person name="Suzuki M."/>
            <person name="Aoki J."/>
            <person name="Arakawa T."/>
            <person name="Iida J."/>
            <person name="Imamura K."/>
            <person name="Itoh M."/>
            <person name="Kato T."/>
            <person name="Kawaji H."/>
            <person name="Kawagashira N."/>
            <person name="Kawashima T."/>
            <person name="Kojima M."/>
            <person name="Kondo S."/>
            <person name="Konno H."/>
            <person name="Nakano K."/>
            <person name="Ninomiya N."/>
            <person name="Nishio T."/>
            <person name="Okada M."/>
            <person name="Plessy C."/>
            <person name="Shibata K."/>
            <person name="Shiraki T."/>
            <person name="Suzuki S."/>
            <person name="Tagami M."/>
            <person name="Waki K."/>
            <person name="Watahiki A."/>
            <person name="Okamura-Oho Y."/>
            <person name="Suzuki H."/>
            <person name="Kawai J."/>
            <person name="Hayashizaki Y."/>
        </authorList>
    </citation>
    <scope>NUCLEOTIDE SEQUENCE [LARGE SCALE MRNA]</scope>
    <source>
        <strain>C57BL/6J</strain>
        <tissue>Cerebellum</tissue>
    </source>
</reference>
<reference key="9">
    <citation type="journal article" date="2009" name="PLoS Biol.">
        <title>Lineage-specific biology revealed by a finished genome assembly of the mouse.</title>
        <authorList>
            <person name="Church D.M."/>
            <person name="Goodstadt L."/>
            <person name="Hillier L.W."/>
            <person name="Zody M.C."/>
            <person name="Goldstein S."/>
            <person name="She X."/>
            <person name="Bult C.J."/>
            <person name="Agarwala R."/>
            <person name="Cherry J.L."/>
            <person name="DiCuccio M."/>
            <person name="Hlavina W."/>
            <person name="Kapustin Y."/>
            <person name="Meric P."/>
            <person name="Maglott D."/>
            <person name="Birtle Z."/>
            <person name="Marques A.C."/>
            <person name="Graves T."/>
            <person name="Zhou S."/>
            <person name="Teague B."/>
            <person name="Potamousis K."/>
            <person name="Churas C."/>
            <person name="Place M."/>
            <person name="Herschleb J."/>
            <person name="Runnheim R."/>
            <person name="Forrest D."/>
            <person name="Amos-Landgraf J."/>
            <person name="Schwartz D.C."/>
            <person name="Cheng Z."/>
            <person name="Lindblad-Toh K."/>
            <person name="Eichler E.E."/>
            <person name="Ponting C.P."/>
        </authorList>
    </citation>
    <scope>NUCLEOTIDE SEQUENCE [LARGE SCALE GENOMIC DNA]</scope>
    <source>
        <strain>C57BL/6J</strain>
    </source>
</reference>
<reference key="10">
    <citation type="journal article" date="2004" name="Genome Res.">
        <title>The status, quality, and expansion of the NIH full-length cDNA project: the Mammalian Gene Collection (MGC).</title>
        <authorList>
            <consortium name="The MGC Project Team"/>
        </authorList>
    </citation>
    <scope>NUCLEOTIDE SEQUENCE [LARGE SCALE MRNA]</scope>
    <source>
        <strain>C57BL/6J</strain>
        <tissue>Brain</tissue>
    </source>
</reference>
<reference key="11">
    <citation type="journal article" date="1995" name="Oncogene">
        <title>Identification of alternative exons, including a novel exon, in the tyrosine kinase receptor gene Etk2/tyro3 that explain differences in 5' cDNA sequences.</title>
        <authorList>
            <person name="Biesecker L.G."/>
            <person name="Giannola D.M."/>
            <person name="Emerson S.G."/>
        </authorList>
    </citation>
    <scope>NUCLEOTIDE SEQUENCE [GENOMIC DNA] OF 1-92 (ISOFORMS 1; 2 AND 3)</scope>
    <source>
        <strain>129/Sv</strain>
        <tissue>Liver</tissue>
    </source>
</reference>
<reference key="12">
    <citation type="journal article" date="1999" name="Nature">
        <title>Tyro-3 family receptors are essential regulators of mammalian spermatogenesis.</title>
        <authorList>
            <person name="Lu Q."/>
            <person name="Gore M."/>
            <person name="Zhang Q."/>
            <person name="Camenisch T."/>
            <person name="Boast S."/>
            <person name="Casagranda F."/>
            <person name="Lai C."/>
            <person name="Skinner M.K."/>
            <person name="Klein R."/>
            <person name="Matsushima G.K."/>
            <person name="Earp H.S."/>
            <person name="Goff S.P."/>
            <person name="Lemke G."/>
        </authorList>
    </citation>
    <scope>DISRUPTION PHENOTYPE</scope>
</reference>
<reference key="13">
    <citation type="journal article" date="2000" name="Blood">
        <title>Transforming activity of receptor tyrosine kinase tyro3 is mediated, at least in part, by the PI3 kinase-signaling pathway.</title>
        <authorList>
            <person name="Lan Z."/>
            <person name="Wu H."/>
            <person name="Li W."/>
            <person name="Wu S."/>
            <person name="Lu L."/>
            <person name="Xu M."/>
            <person name="Dai W."/>
        </authorList>
    </citation>
    <scope>INTERACTION WITH PIK3R1</scope>
</reference>
<reference key="14">
    <citation type="journal article" date="2005" name="J. Clin. Invest.">
        <title>Role of Gas6 receptors in platelet signaling during thrombus stabilization and implications for antithrombotic therapy.</title>
        <authorList>
            <person name="Angelillo-Scherrer A."/>
            <person name="Burnier L."/>
            <person name="Flores N."/>
            <person name="Savi P."/>
            <person name="DeMol M."/>
            <person name="Schaeffer P."/>
            <person name="Herbert J.M."/>
            <person name="Lemke G."/>
            <person name="Goff S.P."/>
            <person name="Matsushima G.K."/>
            <person name="Earp H.S."/>
            <person name="Vesin C."/>
            <person name="Hoylaerts M.F."/>
            <person name="Plaisance S."/>
            <person name="Collen D."/>
            <person name="Conway E.M."/>
            <person name="Wehrle-Haller B."/>
            <person name="Carmeliet P."/>
        </authorList>
    </citation>
    <scope>FUNCTION IN PLATELET ACTIVATION</scope>
</reference>
<reference key="15">
    <citation type="journal article" date="2009" name="Nat. Biotechnol.">
        <title>Mass-spectrometric identification and relative quantification of N-linked cell surface glycoproteins.</title>
        <authorList>
            <person name="Wollscheid B."/>
            <person name="Bausch-Fluck D."/>
            <person name="Henderson C."/>
            <person name="O'Brien R."/>
            <person name="Bibel M."/>
            <person name="Schiess R."/>
            <person name="Aebersold R."/>
            <person name="Watts J.D."/>
        </authorList>
    </citation>
    <scope>GLYCOSYLATION [LARGE SCALE ANALYSIS] AT ASN-181</scope>
</reference>
<reference key="16">
    <citation type="journal article" date="2010" name="Cell">
        <title>A tissue-specific atlas of mouse protein phosphorylation and expression.</title>
        <authorList>
            <person name="Huttlin E.L."/>
            <person name="Jedrychowski M.P."/>
            <person name="Elias J.E."/>
            <person name="Goswami T."/>
            <person name="Rad R."/>
            <person name="Beausoleil S.A."/>
            <person name="Villen J."/>
            <person name="Haas W."/>
            <person name="Sowa M.E."/>
            <person name="Gygi S.P."/>
        </authorList>
    </citation>
    <scope>PHOSPHORYLATION [LARGE SCALE ANALYSIS] AT SER-456</scope>
    <scope>IDENTIFICATION BY MASS SPECTROMETRY [LARGE SCALE ANALYSIS]</scope>
    <source>
        <tissue>Brain</tissue>
        <tissue>Testis</tissue>
    </source>
</reference>
<reference key="17">
    <citation type="journal article" date="2010" name="EMBO J.">
        <title>Tubby and tubby-like protein 1 are new MerTK ligands for phagocytosis.</title>
        <authorList>
            <person name="Caberoy N.B."/>
            <person name="Zhou Y."/>
            <person name="Li W."/>
        </authorList>
    </citation>
    <scope>INTERACTION WITH TULP1</scope>
</reference>
<reference key="18">
    <citation type="journal article" date="2010" name="J. Neurosci.">
        <title>Protein S protects neurons from excitotoxic injury by activating the TAM receptor Tyro3-phosphatidylinositol 3-kinase-Akt pathway through its sex hormone-binding globulin-like region.</title>
        <authorList>
            <person name="Zhong Z."/>
            <person name="Wang Y."/>
            <person name="Guo H."/>
            <person name="Sagare A."/>
            <person name="Fernandez J.A."/>
            <person name="Bell R.D."/>
            <person name="Barrett T.M."/>
            <person name="Griffin J.H."/>
            <person name="Freeman R.S."/>
            <person name="Zlokovic B.V."/>
        </authorList>
    </citation>
    <scope>FUNCTION IN NEURON PROTECTION</scope>
</reference>
<reference key="19">
    <citation type="journal article" date="2010" name="Endocrinology">
        <title>Sertoli cell-initiated testicular innate immune response through toll-like receptor-3 activation is negatively regulated by Tyro3, Axl, and mer receptors.</title>
        <authorList>
            <person name="Sun B."/>
            <person name="Qi N."/>
            <person name="Shang T."/>
            <person name="Wu H."/>
            <person name="Deng T."/>
            <person name="Han D."/>
        </authorList>
    </citation>
    <scope>FUNCTION IN IMMUNE RESPONSE INHIBITION</scope>
</reference>
<reference key="20">
    <citation type="journal article" date="2011" name="Mol. Neurodegener.">
        <title>Protein S blocks the extrinsic apoptotic cascade in tissue plasminogen activator/N-methyl D-aspartate-treated neurons via Tyro3-Akt-FKHRL1 signaling pathway.</title>
        <authorList>
            <person name="Guo H."/>
            <person name="Barrett T.M."/>
            <person name="Zhong Z."/>
            <person name="Fernandez J.A."/>
            <person name="Griffin J.H."/>
            <person name="Freeman R.S."/>
            <person name="Zlokovic B.V."/>
        </authorList>
    </citation>
    <scope>FUNCTION</scope>
</reference>
<accession>P55144</accession>
<accession>O09070</accession>
<accession>O09080</accession>
<accession>P70285</accession>
<accession>Q60752</accession>
<accession>Q62482</accession>
<accession>Q62483</accession>
<accession>Q62484</accession>
<accession>Q6NZM6</accession>
<accession>Q78E85</accession>
<accession>Q78E87</accession>
<protein>
    <recommendedName>
        <fullName>Tyrosine-protein kinase receptor TYRO3</fullName>
        <ecNumber>2.7.10.1</ecNumber>
    </recommendedName>
    <alternativeName>
        <fullName>Etk2/tyro3</fullName>
    </alternativeName>
    <alternativeName>
        <fullName>TK19-2</fullName>
    </alternativeName>
    <alternativeName>
        <fullName>Tyrosine-protein kinase DTK</fullName>
    </alternativeName>
    <alternativeName>
        <fullName>Tyrosine-protein kinase RSE</fullName>
    </alternativeName>
    <alternativeName>
        <fullName>Tyrosine-protein kinase TIF</fullName>
    </alternativeName>
</protein>